<dbReference type="EC" id="4.1.1.94" evidence="2"/>
<dbReference type="EMBL" id="EU668355">
    <property type="protein sequence ID" value="ACF94508.1"/>
    <property type="molecule type" value="mRNA"/>
</dbReference>
<dbReference type="EMBL" id="AL834469">
    <property type="protein sequence ID" value="CAD39128.1"/>
    <property type="molecule type" value="mRNA"/>
</dbReference>
<dbReference type="EMBL" id="AK303812">
    <property type="protein sequence ID" value="BAH14056.1"/>
    <property type="molecule type" value="mRNA"/>
</dbReference>
<dbReference type="EMBL" id="AF220192">
    <property type="protein sequence ID" value="AAF67657.1"/>
    <property type="status" value="ALT_FRAME"/>
    <property type="molecule type" value="mRNA"/>
</dbReference>
<dbReference type="EMBL" id="AL109939">
    <property type="status" value="NOT_ANNOTATED_CDS"/>
    <property type="molecule type" value="Genomic_DNA"/>
</dbReference>
<dbReference type="EMBL" id="CH471051">
    <property type="protein sequence ID" value="EAW48107.1"/>
    <property type="molecule type" value="Genomic_DNA"/>
</dbReference>
<dbReference type="EMBL" id="BC003549">
    <property type="protein sequence ID" value="AAH03549.1"/>
    <property type="molecule type" value="mRNA"/>
</dbReference>
<dbReference type="CCDS" id="CCDS34530.1">
    <molecule id="Q9NTX5-5"/>
</dbReference>
<dbReference type="CCDS" id="CCDS43504.1">
    <molecule id="Q9NTX5-2"/>
</dbReference>
<dbReference type="CCDS" id="CCDS47471.1">
    <molecule id="Q9NTX5-1"/>
</dbReference>
<dbReference type="CCDS" id="CCDS47472.1">
    <molecule id="Q9NTX5-3"/>
</dbReference>
<dbReference type="CCDS" id="CCDS55054.1">
    <molecule id="Q9NTX5-4"/>
</dbReference>
<dbReference type="RefSeq" id="NP_001002030.1">
    <molecule id="Q9NTX5-2"/>
    <property type="nucleotide sequence ID" value="NM_001002030.2"/>
</dbReference>
<dbReference type="RefSeq" id="NP_001099014.1">
    <molecule id="Q9NTX5-3"/>
    <property type="nucleotide sequence ID" value="NM_001105544.2"/>
</dbReference>
<dbReference type="RefSeq" id="NP_001099015.1">
    <molecule id="Q9NTX5-4"/>
    <property type="nucleotide sequence ID" value="NM_001105545.2"/>
</dbReference>
<dbReference type="RefSeq" id="NP_001132982.1">
    <molecule id="Q9NTX5-1"/>
    <property type="nucleotide sequence ID" value="NM_001139510.2"/>
</dbReference>
<dbReference type="RefSeq" id="NP_060949.2">
    <molecule id="Q9NTX5-5"/>
    <property type="nucleotide sequence ID" value="NM_018479.4"/>
</dbReference>
<dbReference type="RefSeq" id="XP_005267104.1">
    <molecule id="Q9NTX5-2"/>
    <property type="nucleotide sequence ID" value="XM_005267047.4"/>
</dbReference>
<dbReference type="RefSeq" id="XP_005267105.1">
    <property type="nucleotide sequence ID" value="XM_005267048.1"/>
</dbReference>
<dbReference type="RefSeq" id="XP_005267107.1">
    <property type="nucleotide sequence ID" value="XM_005267050.2"/>
</dbReference>
<dbReference type="RefSeq" id="XP_016866545.1">
    <property type="nucleotide sequence ID" value="XM_017011056.1"/>
</dbReference>
<dbReference type="RefSeq" id="XP_047275027.1">
    <molecule id="Q9NTX5-2"/>
    <property type="nucleotide sequence ID" value="XM_047419071.1"/>
</dbReference>
<dbReference type="RefSeq" id="XP_047275029.1">
    <molecule id="Q9NTX5-5"/>
    <property type="nucleotide sequence ID" value="XM_047419073.1"/>
</dbReference>
<dbReference type="RefSeq" id="XP_047275030.1">
    <molecule id="Q9NTX5-4"/>
    <property type="nucleotide sequence ID" value="XM_047419074.1"/>
</dbReference>
<dbReference type="RefSeq" id="XP_054211896.1">
    <molecule id="Q9NTX5-2"/>
    <property type="nucleotide sequence ID" value="XM_054355921.1"/>
</dbReference>
<dbReference type="RefSeq" id="XP_054211897.1">
    <molecule id="Q9NTX5-2"/>
    <property type="nucleotide sequence ID" value="XM_054355922.1"/>
</dbReference>
<dbReference type="RefSeq" id="XP_054211899.1">
    <molecule id="Q9NTX5-5"/>
    <property type="nucleotide sequence ID" value="XM_054355924.1"/>
</dbReference>
<dbReference type="RefSeq" id="XP_054211901.1">
    <molecule id="Q9NTX5-4"/>
    <property type="nucleotide sequence ID" value="XM_054355926.1"/>
</dbReference>
<dbReference type="SMR" id="Q9NTX5"/>
<dbReference type="BioGRID" id="120964">
    <property type="interactions" value="90"/>
</dbReference>
<dbReference type="FunCoup" id="Q9NTX5">
    <property type="interactions" value="869"/>
</dbReference>
<dbReference type="IntAct" id="Q9NTX5">
    <property type="interactions" value="38"/>
</dbReference>
<dbReference type="STRING" id="9606.ENSP00000436585"/>
<dbReference type="GlyGen" id="Q9NTX5">
    <property type="glycosylation" value="1 site, 1 O-linked glycan (1 site)"/>
</dbReference>
<dbReference type="iPTMnet" id="Q9NTX5"/>
<dbReference type="PhosphoSitePlus" id="Q9NTX5"/>
<dbReference type="BioMuta" id="ECHDC1"/>
<dbReference type="DMDM" id="124007138"/>
<dbReference type="jPOST" id="Q9NTX5"/>
<dbReference type="MassIVE" id="Q9NTX5"/>
<dbReference type="PaxDb" id="9606-ENSP00000436585"/>
<dbReference type="PeptideAtlas" id="Q9NTX5"/>
<dbReference type="ProteomicsDB" id="82636">
    <molecule id="Q9NTX5-1"/>
</dbReference>
<dbReference type="ProteomicsDB" id="82637">
    <molecule id="Q9NTX5-2"/>
</dbReference>
<dbReference type="ProteomicsDB" id="82638">
    <molecule id="Q9NTX5-3"/>
</dbReference>
<dbReference type="ProteomicsDB" id="82639">
    <molecule id="Q9NTX5-4"/>
</dbReference>
<dbReference type="ProteomicsDB" id="82640">
    <molecule id="Q9NTX5-5"/>
</dbReference>
<dbReference type="ProteomicsDB" id="82641">
    <molecule id="Q9NTX5-6"/>
</dbReference>
<dbReference type="Pumba" id="Q9NTX5"/>
<dbReference type="Antibodypedia" id="32755">
    <property type="antibodies" value="128 antibodies from 20 providers"/>
</dbReference>
<dbReference type="DNASU" id="55862"/>
<dbReference type="Ensembl" id="ENST00000368289.6">
    <molecule id="Q9NTX5-5"/>
    <property type="protein sequence ID" value="ENSP00000357272.2"/>
    <property type="gene ID" value="ENSG00000093144.19"/>
</dbReference>
<dbReference type="Ensembl" id="ENST00000368291.6">
    <molecule id="Q9NTX5-5"/>
    <property type="protein sequence ID" value="ENSP00000357274.2"/>
    <property type="gene ID" value="ENSG00000093144.19"/>
</dbReference>
<dbReference type="Ensembl" id="ENST00000430841.6">
    <molecule id="Q9NTX5-2"/>
    <property type="protein sequence ID" value="ENSP00000402492.2"/>
    <property type="gene ID" value="ENSG00000093144.19"/>
</dbReference>
<dbReference type="Ensembl" id="ENST00000454591.6">
    <molecule id="Q9NTX5-3"/>
    <property type="protein sequence ID" value="ENSP00000404866.2"/>
    <property type="gene ID" value="ENSG00000093144.19"/>
</dbReference>
<dbReference type="Ensembl" id="ENST00000454859.8">
    <molecule id="Q9NTX5-2"/>
    <property type="protein sequence ID" value="ENSP00000401751.3"/>
    <property type="gene ID" value="ENSG00000093144.19"/>
</dbReference>
<dbReference type="Ensembl" id="ENST00000474289.6">
    <molecule id="Q9NTX5-2"/>
    <property type="protein sequence ID" value="ENSP00000434908.1"/>
    <property type="gene ID" value="ENSG00000093144.19"/>
</dbReference>
<dbReference type="Ensembl" id="ENST00000528402.5">
    <molecule id="Q9NTX5-4"/>
    <property type="protein sequence ID" value="ENSP00000436109.1"/>
    <property type="gene ID" value="ENSG00000093144.19"/>
</dbReference>
<dbReference type="Ensembl" id="ENST00000531967.5">
    <molecule id="Q9NTX5-1"/>
    <property type="protein sequence ID" value="ENSP00000436585.1"/>
    <property type="gene ID" value="ENSG00000093144.19"/>
</dbReference>
<dbReference type="GeneID" id="55862"/>
<dbReference type="KEGG" id="hsa:55862"/>
<dbReference type="MANE-Select" id="ENST00000454859.8">
    <molecule id="Q9NTX5-2"/>
    <property type="protein sequence ID" value="ENSP00000401751.3"/>
    <property type="RefSeq nucleotide sequence ID" value="NM_001002030.2"/>
    <property type="RefSeq protein sequence ID" value="NP_001002030.1"/>
</dbReference>
<dbReference type="UCSC" id="uc003qax.4">
    <molecule id="Q9NTX5-1"/>
    <property type="organism name" value="human"/>
</dbReference>
<dbReference type="AGR" id="HGNC:21489"/>
<dbReference type="CTD" id="55862"/>
<dbReference type="DisGeNET" id="55862"/>
<dbReference type="GeneCards" id="ECHDC1"/>
<dbReference type="HGNC" id="HGNC:21489">
    <property type="gene designation" value="ECHDC1"/>
</dbReference>
<dbReference type="HPA" id="ENSG00000093144">
    <property type="expression patterns" value="Low tissue specificity"/>
</dbReference>
<dbReference type="MIM" id="612136">
    <property type="type" value="gene"/>
</dbReference>
<dbReference type="neXtProt" id="NX_Q9NTX5"/>
<dbReference type="OpenTargets" id="ENSG00000093144"/>
<dbReference type="PharmGKB" id="PA134871524"/>
<dbReference type="VEuPathDB" id="HostDB:ENSG00000093144"/>
<dbReference type="eggNOG" id="KOG1680">
    <property type="taxonomic scope" value="Eukaryota"/>
</dbReference>
<dbReference type="GeneTree" id="ENSGT00880000138038"/>
<dbReference type="HOGENOM" id="CLU_2757120_0_0_1"/>
<dbReference type="InParanoid" id="Q9NTX5"/>
<dbReference type="OMA" id="FTICRPE"/>
<dbReference type="OrthoDB" id="448450at2759"/>
<dbReference type="PAN-GO" id="Q9NTX5">
    <property type="GO annotations" value="3 GO annotations based on evolutionary models"/>
</dbReference>
<dbReference type="PhylomeDB" id="Q9NTX5"/>
<dbReference type="TreeFam" id="TF315986"/>
<dbReference type="BRENDA" id="4.1.1.94">
    <property type="organism ID" value="2681"/>
</dbReference>
<dbReference type="PathwayCommons" id="Q9NTX5"/>
<dbReference type="SignaLink" id="Q9NTX5"/>
<dbReference type="BioGRID-ORCS" id="55862">
    <property type="hits" value="13 hits in 1158 CRISPR screens"/>
</dbReference>
<dbReference type="ChiTaRS" id="ECHDC1">
    <property type="organism name" value="human"/>
</dbReference>
<dbReference type="GenomeRNAi" id="55862"/>
<dbReference type="Pharos" id="Q9NTX5">
    <property type="development level" value="Tbio"/>
</dbReference>
<dbReference type="PRO" id="PR:Q9NTX5"/>
<dbReference type="Proteomes" id="UP000005640">
    <property type="component" value="Chromosome 6"/>
</dbReference>
<dbReference type="RNAct" id="Q9NTX5">
    <property type="molecule type" value="protein"/>
</dbReference>
<dbReference type="Bgee" id="ENSG00000093144">
    <property type="expression patterns" value="Expressed in pigmented layer of retina and 199 other cell types or tissues"/>
</dbReference>
<dbReference type="ExpressionAtlas" id="Q9NTX5">
    <property type="expression patterns" value="baseline and differential"/>
</dbReference>
<dbReference type="GO" id="GO:0005829">
    <property type="term" value="C:cytosol"/>
    <property type="evidence" value="ECO:0000250"/>
    <property type="project" value="UniProtKB"/>
</dbReference>
<dbReference type="GO" id="GO:0016831">
    <property type="term" value="F:carboxy-lyase activity"/>
    <property type="evidence" value="ECO:0000250"/>
    <property type="project" value="UniProtKB"/>
</dbReference>
<dbReference type="GO" id="GO:0004492">
    <property type="term" value="F:methyl/ethyl malonyl-CoA decarboxylase activity"/>
    <property type="evidence" value="ECO:0007669"/>
    <property type="project" value="UniProtKB-EC"/>
</dbReference>
<dbReference type="GO" id="GO:0006635">
    <property type="term" value="P:fatty acid beta-oxidation"/>
    <property type="evidence" value="ECO:0000318"/>
    <property type="project" value="GO_Central"/>
</dbReference>
<dbReference type="CDD" id="cd06558">
    <property type="entry name" value="crotonase-like"/>
    <property type="match status" value="1"/>
</dbReference>
<dbReference type="FunFam" id="3.90.226.10:FF:000040">
    <property type="entry name" value="Ethylmalonyl-CoA decarboxylase 1"/>
    <property type="match status" value="1"/>
</dbReference>
<dbReference type="Gene3D" id="3.90.226.10">
    <property type="entry name" value="2-enoyl-CoA Hydratase, Chain A, domain 1"/>
    <property type="match status" value="1"/>
</dbReference>
<dbReference type="InterPro" id="IPR029045">
    <property type="entry name" value="ClpP/crotonase-like_dom_sf"/>
</dbReference>
<dbReference type="InterPro" id="IPR018376">
    <property type="entry name" value="Enoyl-CoA_hyd/isom_CS"/>
</dbReference>
<dbReference type="InterPro" id="IPR001753">
    <property type="entry name" value="Enoyl-CoA_hydra/iso"/>
</dbReference>
<dbReference type="PANTHER" id="PTHR11941">
    <property type="entry name" value="ENOYL-COA HYDRATASE-RELATED"/>
    <property type="match status" value="1"/>
</dbReference>
<dbReference type="PANTHER" id="PTHR11941:SF27">
    <property type="entry name" value="ETHYLMALONYL-COA DECARBOXYLASE"/>
    <property type="match status" value="1"/>
</dbReference>
<dbReference type="Pfam" id="PF00378">
    <property type="entry name" value="ECH_1"/>
    <property type="match status" value="1"/>
</dbReference>
<dbReference type="SUPFAM" id="SSF52096">
    <property type="entry name" value="ClpP/crotonase"/>
    <property type="match status" value="1"/>
</dbReference>
<dbReference type="PROSITE" id="PS00166">
    <property type="entry name" value="ENOYL_COA_HYDRATASE"/>
    <property type="match status" value="1"/>
</dbReference>
<name>ECHD1_HUMAN</name>
<gene>
    <name type="primary">ECHDC1</name>
</gene>
<accession>Q9NTX5</accession>
<accession>A6NFJ5</accession>
<accession>B7Z8S0</accession>
<accession>E9PEN7</accession>
<accession>E9PR31</accession>
<accession>F8W851</accession>
<accession>Q5TEF6</accession>
<accession>Q5TEF7</accession>
<accession>Q5TEG0</accession>
<accession>Q5TEG4</accession>
<accession>Q9NZ30</accession>
<accession>V9HW18</accession>
<proteinExistence type="evidence at protein level"/>
<keyword id="KW-0007">Acetylation</keyword>
<keyword id="KW-0025">Alternative splicing</keyword>
<keyword id="KW-0963">Cytoplasm</keyword>
<keyword id="KW-0456">Lyase</keyword>
<keyword id="KW-1267">Proteomics identification</keyword>
<keyword id="KW-1185">Reference proteome</keyword>
<protein>
    <recommendedName>
        <fullName>Ethylmalonyl-CoA decarboxylase</fullName>
        <ecNumber evidence="2">4.1.1.94</ecNumber>
    </recommendedName>
    <alternativeName>
        <fullName>Enoyl-CoA hydratase domain-containing protein 1</fullName>
    </alternativeName>
    <alternativeName>
        <fullName>Methylmalonyl-CoA decarboxylase</fullName>
        <shortName>MMCD</shortName>
    </alternativeName>
</protein>
<sequence length="307" mass="33698">MALKQEMAKSLLKTASLSGRTKLLHQTGLSLYSTSHGFYEEEVKKTLQQFPGGSIDLQKEDNGIGILTLNNPSRMNAFSGVMMLQLLEKVIELENWTEGKGLIVRGAKNTFSSGSDLNAVKSLGTPEDGMAVCMFMQNTLTRFMRLPLISVALVQGWALGGGAEFTTACDFRLMTPESKIRFVHKEMGIIPSWGGTTRLVEIIGSRQALKVLSGALKLDSKNALNIGMVEEVLQSSDETKSLEEAQEWLKQFIQGPPEVIRALKKSVCSGRELYLEEALQNERDLLGTVWGGPANLEAIAKKGKFNK</sequence>
<reference key="1">
    <citation type="submission" date="2008-04" db="EMBL/GenBank/DDBJ databases">
        <authorList>
            <person name="Li J.Y."/>
            <person name="Wang H.Y."/>
            <person name="Liu F.J."/>
            <person name="Liu J."/>
        </authorList>
    </citation>
    <scope>NUCLEOTIDE SEQUENCE [LARGE SCALE MRNA] (ISOFORM 4)</scope>
    <source>
        <tissue>Epididymis</tissue>
    </source>
</reference>
<reference key="2">
    <citation type="journal article" date="2007" name="BMC Genomics">
        <title>The full-ORF clone resource of the German cDNA consortium.</title>
        <authorList>
            <person name="Bechtel S."/>
            <person name="Rosenfelder H."/>
            <person name="Duda A."/>
            <person name="Schmidt C.P."/>
            <person name="Ernst U."/>
            <person name="Wellenreuther R."/>
            <person name="Mehrle A."/>
            <person name="Schuster C."/>
            <person name="Bahr A."/>
            <person name="Bloecker H."/>
            <person name="Heubner D."/>
            <person name="Hoerlein A."/>
            <person name="Michel G."/>
            <person name="Wedler H."/>
            <person name="Koehrer K."/>
            <person name="Ottenwaelder B."/>
            <person name="Poustka A."/>
            <person name="Wiemann S."/>
            <person name="Schupp I."/>
        </authorList>
    </citation>
    <scope>NUCLEOTIDE SEQUENCE [LARGE SCALE MRNA] (ISOFORM 2)</scope>
    <source>
        <tissue>Melanoma</tissue>
    </source>
</reference>
<reference key="3">
    <citation type="journal article" date="2004" name="Nat. Genet.">
        <title>Complete sequencing and characterization of 21,243 full-length human cDNAs.</title>
        <authorList>
            <person name="Ota T."/>
            <person name="Suzuki Y."/>
            <person name="Nishikawa T."/>
            <person name="Otsuki T."/>
            <person name="Sugiyama T."/>
            <person name="Irie R."/>
            <person name="Wakamatsu A."/>
            <person name="Hayashi K."/>
            <person name="Sato H."/>
            <person name="Nagai K."/>
            <person name="Kimura K."/>
            <person name="Makita H."/>
            <person name="Sekine M."/>
            <person name="Obayashi M."/>
            <person name="Nishi T."/>
            <person name="Shibahara T."/>
            <person name="Tanaka T."/>
            <person name="Ishii S."/>
            <person name="Yamamoto J."/>
            <person name="Saito K."/>
            <person name="Kawai Y."/>
            <person name="Isono Y."/>
            <person name="Nakamura Y."/>
            <person name="Nagahari K."/>
            <person name="Murakami K."/>
            <person name="Yasuda T."/>
            <person name="Iwayanagi T."/>
            <person name="Wagatsuma M."/>
            <person name="Shiratori A."/>
            <person name="Sudo H."/>
            <person name="Hosoiri T."/>
            <person name="Kaku Y."/>
            <person name="Kodaira H."/>
            <person name="Kondo H."/>
            <person name="Sugawara M."/>
            <person name="Takahashi M."/>
            <person name="Kanda K."/>
            <person name="Yokoi T."/>
            <person name="Furuya T."/>
            <person name="Kikkawa E."/>
            <person name="Omura Y."/>
            <person name="Abe K."/>
            <person name="Kamihara K."/>
            <person name="Katsuta N."/>
            <person name="Sato K."/>
            <person name="Tanikawa M."/>
            <person name="Yamazaki M."/>
            <person name="Ninomiya K."/>
            <person name="Ishibashi T."/>
            <person name="Yamashita H."/>
            <person name="Murakawa K."/>
            <person name="Fujimori K."/>
            <person name="Tanai H."/>
            <person name="Kimata M."/>
            <person name="Watanabe M."/>
            <person name="Hiraoka S."/>
            <person name="Chiba Y."/>
            <person name="Ishida S."/>
            <person name="Ono Y."/>
            <person name="Takiguchi S."/>
            <person name="Watanabe S."/>
            <person name="Yosida M."/>
            <person name="Hotuta T."/>
            <person name="Kusano J."/>
            <person name="Kanehori K."/>
            <person name="Takahashi-Fujii A."/>
            <person name="Hara H."/>
            <person name="Tanase T.-O."/>
            <person name="Nomura Y."/>
            <person name="Togiya S."/>
            <person name="Komai F."/>
            <person name="Hara R."/>
            <person name="Takeuchi K."/>
            <person name="Arita M."/>
            <person name="Imose N."/>
            <person name="Musashino K."/>
            <person name="Yuuki H."/>
            <person name="Oshima A."/>
            <person name="Sasaki N."/>
            <person name="Aotsuka S."/>
            <person name="Yoshikawa Y."/>
            <person name="Matsunawa H."/>
            <person name="Ichihara T."/>
            <person name="Shiohata N."/>
            <person name="Sano S."/>
            <person name="Moriya S."/>
            <person name="Momiyama H."/>
            <person name="Satoh N."/>
            <person name="Takami S."/>
            <person name="Terashima Y."/>
            <person name="Suzuki O."/>
            <person name="Nakagawa S."/>
            <person name="Senoh A."/>
            <person name="Mizoguchi H."/>
            <person name="Goto Y."/>
            <person name="Shimizu F."/>
            <person name="Wakebe H."/>
            <person name="Hishigaki H."/>
            <person name="Watanabe T."/>
            <person name="Sugiyama A."/>
            <person name="Takemoto M."/>
            <person name="Kawakami B."/>
            <person name="Yamazaki M."/>
            <person name="Watanabe K."/>
            <person name="Kumagai A."/>
            <person name="Itakura S."/>
            <person name="Fukuzumi Y."/>
            <person name="Fujimori Y."/>
            <person name="Komiyama M."/>
            <person name="Tashiro H."/>
            <person name="Tanigami A."/>
            <person name="Fujiwara T."/>
            <person name="Ono T."/>
            <person name="Yamada K."/>
            <person name="Fujii Y."/>
            <person name="Ozaki K."/>
            <person name="Hirao M."/>
            <person name="Ohmori Y."/>
            <person name="Kawabata A."/>
            <person name="Hikiji T."/>
            <person name="Kobatake N."/>
            <person name="Inagaki H."/>
            <person name="Ikema Y."/>
            <person name="Okamoto S."/>
            <person name="Okitani R."/>
            <person name="Kawakami T."/>
            <person name="Noguchi S."/>
            <person name="Itoh T."/>
            <person name="Shigeta K."/>
            <person name="Senba T."/>
            <person name="Matsumura K."/>
            <person name="Nakajima Y."/>
            <person name="Mizuno T."/>
            <person name="Morinaga M."/>
            <person name="Sasaki M."/>
            <person name="Togashi T."/>
            <person name="Oyama M."/>
            <person name="Hata H."/>
            <person name="Watanabe M."/>
            <person name="Komatsu T."/>
            <person name="Mizushima-Sugano J."/>
            <person name="Satoh T."/>
            <person name="Shirai Y."/>
            <person name="Takahashi Y."/>
            <person name="Nakagawa K."/>
            <person name="Okumura K."/>
            <person name="Nagase T."/>
            <person name="Nomura N."/>
            <person name="Kikuchi H."/>
            <person name="Masuho Y."/>
            <person name="Yamashita R."/>
            <person name="Nakai K."/>
            <person name="Yada T."/>
            <person name="Nakamura Y."/>
            <person name="Ohara O."/>
            <person name="Isogai T."/>
            <person name="Sugano S."/>
        </authorList>
    </citation>
    <scope>NUCLEOTIDE SEQUENCE [LARGE SCALE MRNA] (ISOFORM 3)</scope>
    <source>
        <tissue>Liver</tissue>
    </source>
</reference>
<reference key="4">
    <citation type="submission" date="1999-12" db="EMBL/GenBank/DDBJ databases">
        <title>A novel gene expressed in human adrenal gland.</title>
        <authorList>
            <person name="Xiao H."/>
            <person name="Song H."/>
            <person name="Gao G."/>
            <person name="Ren S."/>
            <person name="Chen Z."/>
            <person name="Han Z."/>
        </authorList>
    </citation>
    <scope>NUCLEOTIDE SEQUENCE [LARGE SCALE MRNA] (ISOFORM 6)</scope>
    <source>
        <tissue>Hypothalamus</tissue>
    </source>
</reference>
<reference key="5">
    <citation type="journal article" date="2003" name="Nature">
        <title>The DNA sequence and analysis of human chromosome 6.</title>
        <authorList>
            <person name="Mungall A.J."/>
            <person name="Palmer S.A."/>
            <person name="Sims S.K."/>
            <person name="Edwards C.A."/>
            <person name="Ashurst J.L."/>
            <person name="Wilming L."/>
            <person name="Jones M.C."/>
            <person name="Horton R."/>
            <person name="Hunt S.E."/>
            <person name="Scott C.E."/>
            <person name="Gilbert J.G.R."/>
            <person name="Clamp M.E."/>
            <person name="Bethel G."/>
            <person name="Milne S."/>
            <person name="Ainscough R."/>
            <person name="Almeida J.P."/>
            <person name="Ambrose K.D."/>
            <person name="Andrews T.D."/>
            <person name="Ashwell R.I.S."/>
            <person name="Babbage A.K."/>
            <person name="Bagguley C.L."/>
            <person name="Bailey J."/>
            <person name="Banerjee R."/>
            <person name="Barker D.J."/>
            <person name="Barlow K.F."/>
            <person name="Bates K."/>
            <person name="Beare D.M."/>
            <person name="Beasley H."/>
            <person name="Beasley O."/>
            <person name="Bird C.P."/>
            <person name="Blakey S.E."/>
            <person name="Bray-Allen S."/>
            <person name="Brook J."/>
            <person name="Brown A.J."/>
            <person name="Brown J.Y."/>
            <person name="Burford D.C."/>
            <person name="Burrill W."/>
            <person name="Burton J."/>
            <person name="Carder C."/>
            <person name="Carter N.P."/>
            <person name="Chapman J.C."/>
            <person name="Clark S.Y."/>
            <person name="Clark G."/>
            <person name="Clee C.M."/>
            <person name="Clegg S."/>
            <person name="Cobley V."/>
            <person name="Collier R.E."/>
            <person name="Collins J.E."/>
            <person name="Colman L.K."/>
            <person name="Corby N.R."/>
            <person name="Coville G.J."/>
            <person name="Culley K.M."/>
            <person name="Dhami P."/>
            <person name="Davies J."/>
            <person name="Dunn M."/>
            <person name="Earthrowl M.E."/>
            <person name="Ellington A.E."/>
            <person name="Evans K.A."/>
            <person name="Faulkner L."/>
            <person name="Francis M.D."/>
            <person name="Frankish A."/>
            <person name="Frankland J."/>
            <person name="French L."/>
            <person name="Garner P."/>
            <person name="Garnett J."/>
            <person name="Ghori M.J."/>
            <person name="Gilby L.M."/>
            <person name="Gillson C.J."/>
            <person name="Glithero R.J."/>
            <person name="Grafham D.V."/>
            <person name="Grant M."/>
            <person name="Gribble S."/>
            <person name="Griffiths C."/>
            <person name="Griffiths M.N.D."/>
            <person name="Hall R."/>
            <person name="Halls K.S."/>
            <person name="Hammond S."/>
            <person name="Harley J.L."/>
            <person name="Hart E.A."/>
            <person name="Heath P.D."/>
            <person name="Heathcott R."/>
            <person name="Holmes S.J."/>
            <person name="Howden P.J."/>
            <person name="Howe K.L."/>
            <person name="Howell G.R."/>
            <person name="Huckle E."/>
            <person name="Humphray S.J."/>
            <person name="Humphries M.D."/>
            <person name="Hunt A.R."/>
            <person name="Johnson C.M."/>
            <person name="Joy A.A."/>
            <person name="Kay M."/>
            <person name="Keenan S.J."/>
            <person name="Kimberley A.M."/>
            <person name="King A."/>
            <person name="Laird G.K."/>
            <person name="Langford C."/>
            <person name="Lawlor S."/>
            <person name="Leongamornlert D.A."/>
            <person name="Leversha M."/>
            <person name="Lloyd C.R."/>
            <person name="Lloyd D.M."/>
            <person name="Loveland J.E."/>
            <person name="Lovell J."/>
            <person name="Martin S."/>
            <person name="Mashreghi-Mohammadi M."/>
            <person name="Maslen G.L."/>
            <person name="Matthews L."/>
            <person name="McCann O.T."/>
            <person name="McLaren S.J."/>
            <person name="McLay K."/>
            <person name="McMurray A."/>
            <person name="Moore M.J.F."/>
            <person name="Mullikin J.C."/>
            <person name="Niblett D."/>
            <person name="Nickerson T."/>
            <person name="Novik K.L."/>
            <person name="Oliver K."/>
            <person name="Overton-Larty E.K."/>
            <person name="Parker A."/>
            <person name="Patel R."/>
            <person name="Pearce A.V."/>
            <person name="Peck A.I."/>
            <person name="Phillimore B.J.C.T."/>
            <person name="Phillips S."/>
            <person name="Plumb R.W."/>
            <person name="Porter K.M."/>
            <person name="Ramsey Y."/>
            <person name="Ranby S.A."/>
            <person name="Rice C.M."/>
            <person name="Ross M.T."/>
            <person name="Searle S.M."/>
            <person name="Sehra H.K."/>
            <person name="Sheridan E."/>
            <person name="Skuce C.D."/>
            <person name="Smith S."/>
            <person name="Smith M."/>
            <person name="Spraggon L."/>
            <person name="Squares S.L."/>
            <person name="Steward C.A."/>
            <person name="Sycamore N."/>
            <person name="Tamlyn-Hall G."/>
            <person name="Tester J."/>
            <person name="Theaker A.J."/>
            <person name="Thomas D.W."/>
            <person name="Thorpe A."/>
            <person name="Tracey A."/>
            <person name="Tromans A."/>
            <person name="Tubby B."/>
            <person name="Wall M."/>
            <person name="Wallis J.M."/>
            <person name="West A.P."/>
            <person name="White S.S."/>
            <person name="Whitehead S.L."/>
            <person name="Whittaker H."/>
            <person name="Wild A."/>
            <person name="Willey D.J."/>
            <person name="Wilmer T.E."/>
            <person name="Wood J.M."/>
            <person name="Wray P.W."/>
            <person name="Wyatt J.C."/>
            <person name="Young L."/>
            <person name="Younger R.M."/>
            <person name="Bentley D.R."/>
            <person name="Coulson A."/>
            <person name="Durbin R.M."/>
            <person name="Hubbard T."/>
            <person name="Sulston J.E."/>
            <person name="Dunham I."/>
            <person name="Rogers J."/>
            <person name="Beck S."/>
        </authorList>
    </citation>
    <scope>NUCLEOTIDE SEQUENCE [LARGE SCALE GENOMIC DNA]</scope>
</reference>
<reference key="6">
    <citation type="submission" date="2005-09" db="EMBL/GenBank/DDBJ databases">
        <authorList>
            <person name="Mural R.J."/>
            <person name="Istrail S."/>
            <person name="Sutton G.G."/>
            <person name="Florea L."/>
            <person name="Halpern A.L."/>
            <person name="Mobarry C.M."/>
            <person name="Lippert R."/>
            <person name="Walenz B."/>
            <person name="Shatkay H."/>
            <person name="Dew I."/>
            <person name="Miller J.R."/>
            <person name="Flanigan M.J."/>
            <person name="Edwards N.J."/>
            <person name="Bolanos R."/>
            <person name="Fasulo D."/>
            <person name="Halldorsson B.V."/>
            <person name="Hannenhalli S."/>
            <person name="Turner R."/>
            <person name="Yooseph S."/>
            <person name="Lu F."/>
            <person name="Nusskern D.R."/>
            <person name="Shue B.C."/>
            <person name="Zheng X.H."/>
            <person name="Zhong F."/>
            <person name="Delcher A.L."/>
            <person name="Huson D.H."/>
            <person name="Kravitz S.A."/>
            <person name="Mouchard L."/>
            <person name="Reinert K."/>
            <person name="Remington K.A."/>
            <person name="Clark A.G."/>
            <person name="Waterman M.S."/>
            <person name="Eichler E.E."/>
            <person name="Adams M.D."/>
            <person name="Hunkapiller M.W."/>
            <person name="Myers E.W."/>
            <person name="Venter J.C."/>
        </authorList>
    </citation>
    <scope>NUCLEOTIDE SEQUENCE [LARGE SCALE GENOMIC DNA]</scope>
</reference>
<reference key="7">
    <citation type="journal article" date="2004" name="Genome Res.">
        <title>The status, quality, and expansion of the NIH full-length cDNA project: the Mammalian Gene Collection (MGC).</title>
        <authorList>
            <consortium name="The MGC Project Team"/>
        </authorList>
    </citation>
    <scope>NUCLEOTIDE SEQUENCE [LARGE SCALE MRNA] (ISOFORM 2)</scope>
    <source>
        <tissue>Skin</tissue>
    </source>
</reference>
<reference key="8">
    <citation type="journal article" date="2011" name="BMC Syst. Biol.">
        <title>Initial characterization of the human central proteome.</title>
        <authorList>
            <person name="Burkard T.R."/>
            <person name="Planyavsky M."/>
            <person name="Kaupe I."/>
            <person name="Breitwieser F.P."/>
            <person name="Buerckstuemmer T."/>
            <person name="Bennett K.L."/>
            <person name="Superti-Furga G."/>
            <person name="Colinge J."/>
        </authorList>
    </citation>
    <scope>IDENTIFICATION BY MASS SPECTROMETRY [LARGE SCALE ANALYSIS]</scope>
</reference>
<reference key="9">
    <citation type="journal article" date="2011" name="J. Biol. Chem.">
        <title>Ethylmalonyl-CoA decarboxylase, a new enzyme involved in metabolite proofreading.</title>
        <authorList>
            <person name="Linster C.L."/>
            <person name="Noel G."/>
            <person name="Stroobant V."/>
            <person name="Vertommen D."/>
            <person name="Vincent M.F."/>
            <person name="Bommer G.T."/>
            <person name="Veiga-da-Cunha M."/>
            <person name="Van Schaftingen E."/>
        </authorList>
    </citation>
    <scope>FUNCTION</scope>
    <scope>CATALYTIC ACTIVITY</scope>
</reference>
<reference key="10">
    <citation type="journal article" date="2012" name="Proc. Natl. Acad. Sci. U.S.A.">
        <title>N-terminal acetylome analyses and functional insights of the N-terminal acetyltransferase NatB.</title>
        <authorList>
            <person name="Van Damme P."/>
            <person name="Lasa M."/>
            <person name="Polevoda B."/>
            <person name="Gazquez C."/>
            <person name="Elosegui-Artola A."/>
            <person name="Kim D.S."/>
            <person name="De Juan-Pardo E."/>
            <person name="Demeyer K."/>
            <person name="Hole K."/>
            <person name="Larrea E."/>
            <person name="Timmerman E."/>
            <person name="Prieto J."/>
            <person name="Arnesen T."/>
            <person name="Sherman F."/>
            <person name="Gevaert K."/>
            <person name="Aldabe R."/>
        </authorList>
    </citation>
    <scope>ACETYLATION [LARGE SCALE ANALYSIS] AT ALA-2 (ISOFORMS 2; 5 AND 6)</scope>
    <scope>CLEAVAGE OF INITIATOR METHIONINE [LARGE SCALE ANALYSIS] (ISOFORM 2)</scope>
    <scope>CLEAVAGE OF INITIATOR METHIONINE [LARGE SCALE ANALYSIS] (ISOFORM 5)</scope>
    <scope>CLEAVAGE OF INITIATOR METHIONINE [LARGE SCALE ANALYSIS] (ISOFORM 6)</scope>
    <scope>IDENTIFICATION BY MASS SPECTROMETRY [LARGE SCALE ANALYSIS]</scope>
</reference>
<reference key="11">
    <citation type="journal article" date="2014" name="J. Proteomics">
        <title>An enzyme assisted RP-RPLC approach for in-depth analysis of human liver phosphoproteome.</title>
        <authorList>
            <person name="Bian Y."/>
            <person name="Song C."/>
            <person name="Cheng K."/>
            <person name="Dong M."/>
            <person name="Wang F."/>
            <person name="Huang J."/>
            <person name="Sun D."/>
            <person name="Wang L."/>
            <person name="Ye M."/>
            <person name="Zou H."/>
        </authorList>
    </citation>
    <scope>IDENTIFICATION BY MASS SPECTROMETRY [LARGE SCALE ANALYSIS]</scope>
    <source>
        <tissue>Liver</tissue>
    </source>
</reference>
<reference key="12">
    <citation type="journal article" date="2015" name="Proteomics">
        <title>N-terminome analysis of the human mitochondrial proteome.</title>
        <authorList>
            <person name="Vaca Jacome A.S."/>
            <person name="Rabilloud T."/>
            <person name="Schaeffer-Reiss C."/>
            <person name="Rompais M."/>
            <person name="Ayoub D."/>
            <person name="Lane L."/>
            <person name="Bairoch A."/>
            <person name="Van Dorsselaer A."/>
            <person name="Carapito C."/>
        </authorList>
    </citation>
    <scope>IDENTIFICATION BY MASS SPECTROMETRY [LARGE SCALE ANALYSIS]</scope>
</reference>
<comment type="function">
    <text evidence="1 2">Decarboxylates ethylmalonyl-CoA, a potentially toxic metabolite, to form butyryl-CoA, suggesting it might be involved in metabolite proofreading (PubMed:22016388). Acts preferentially on (S)-ethylmalonyl-CoA but also has some activity on the (R)-isomer (By similarity). Also has methylmalonyl-CoA decarboxylase activity at lower level (By similarity).</text>
</comment>
<comment type="catalytic activity">
    <reaction evidence="2">
        <text>(2S)-ethylmalonyl-CoA + H(+) = butanoyl-CoA + CO2</text>
        <dbReference type="Rhea" id="RHEA:32131"/>
        <dbReference type="ChEBI" id="CHEBI:15378"/>
        <dbReference type="ChEBI" id="CHEBI:16526"/>
        <dbReference type="ChEBI" id="CHEBI:57371"/>
        <dbReference type="ChEBI" id="CHEBI:60909"/>
        <dbReference type="EC" id="4.1.1.94"/>
    </reaction>
    <physiologicalReaction direction="left-to-right" evidence="9">
        <dbReference type="Rhea" id="RHEA:32132"/>
    </physiologicalReaction>
</comment>
<comment type="catalytic activity">
    <reaction evidence="1">
        <text>(S)-methylmalonyl-CoA + H(+) = propanoyl-CoA + CO2</text>
        <dbReference type="Rhea" id="RHEA:61340"/>
        <dbReference type="ChEBI" id="CHEBI:15378"/>
        <dbReference type="ChEBI" id="CHEBI:16526"/>
        <dbReference type="ChEBI" id="CHEBI:57327"/>
        <dbReference type="ChEBI" id="CHEBI:57392"/>
        <dbReference type="EC" id="4.1.1.94"/>
    </reaction>
    <physiologicalReaction direction="left-to-right" evidence="1">
        <dbReference type="Rhea" id="RHEA:61341"/>
    </physiologicalReaction>
</comment>
<comment type="catalytic activity">
    <reaction evidence="1">
        <text>(2R)-ethylmalonyl-CoA + H(+) = butanoyl-CoA + CO2</text>
        <dbReference type="Rhea" id="RHEA:59540"/>
        <dbReference type="ChEBI" id="CHEBI:15378"/>
        <dbReference type="ChEBI" id="CHEBI:16526"/>
        <dbReference type="ChEBI" id="CHEBI:57371"/>
        <dbReference type="ChEBI" id="CHEBI:85316"/>
        <dbReference type="EC" id="4.1.1.94"/>
    </reaction>
    <physiologicalReaction direction="left-to-right" evidence="1">
        <dbReference type="Rhea" id="RHEA:59541"/>
    </physiologicalReaction>
</comment>
<comment type="interaction">
    <interactant intactId="EBI-2807146">
        <id>Q9NTX5</id>
    </interactant>
    <interactant intactId="EBI-739467">
        <id>Q9H8Y8</id>
        <label>GORASP2</label>
    </interactant>
    <organismsDiffer>false</organismsDiffer>
    <experiments>3</experiments>
</comment>
<comment type="subcellular location">
    <subcellularLocation>
        <location evidence="9">Cytoplasm</location>
        <location evidence="9">Cytosol</location>
    </subcellularLocation>
</comment>
<comment type="alternative products">
    <event type="alternative splicing"/>
    <isoform>
        <id>Q9NTX5-1</id>
        <name>1</name>
        <sequence type="displayed"/>
    </isoform>
    <isoform>
        <id>Q9NTX5-2</id>
        <name>2</name>
        <sequence type="described" ref="VSP_022498"/>
    </isoform>
    <isoform>
        <id>Q9NTX5-3</id>
        <name>3</name>
        <sequence type="described" ref="VSP_042581"/>
    </isoform>
    <isoform>
        <id>Q9NTX5-4</id>
        <name>4</name>
        <name>HEL-S-76</name>
        <sequence type="described" ref="VSP_042581 VSP_042583"/>
    </isoform>
    <isoform>
        <id>Q9NTX5-5</id>
        <name>5</name>
        <sequence type="described" ref="VSP_022498 VSP_042583"/>
    </isoform>
    <isoform>
        <id>Q9NTX5-6</id>
        <name>6</name>
        <sequence type="described" ref="VSP_022498 VSP_042582"/>
    </isoform>
</comment>
<comment type="similarity">
    <text evidence="8">Belongs to the enoyl-CoA hydratase/isomerase family.</text>
</comment>
<comment type="sequence caution" evidence="8">
    <conflict type="frameshift">
        <sequence resource="EMBL-CDS" id="AAF67657"/>
    </conflict>
</comment>
<organism>
    <name type="scientific">Homo sapiens</name>
    <name type="common">Human</name>
    <dbReference type="NCBI Taxonomy" id="9606"/>
    <lineage>
        <taxon>Eukaryota</taxon>
        <taxon>Metazoa</taxon>
        <taxon>Chordata</taxon>
        <taxon>Craniata</taxon>
        <taxon>Vertebrata</taxon>
        <taxon>Euteleostomi</taxon>
        <taxon>Mammalia</taxon>
        <taxon>Eutheria</taxon>
        <taxon>Euarchontoglires</taxon>
        <taxon>Primates</taxon>
        <taxon>Haplorrhini</taxon>
        <taxon>Catarrhini</taxon>
        <taxon>Hominidae</taxon>
        <taxon>Homo</taxon>
    </lineage>
</organism>
<evidence type="ECO:0000250" key="1">
    <source>
        <dbReference type="UniProtKB" id="Q9D9V3"/>
    </source>
</evidence>
<evidence type="ECO:0000269" key="2">
    <source>
    </source>
</evidence>
<evidence type="ECO:0000303" key="3">
    <source>
    </source>
</evidence>
<evidence type="ECO:0000303" key="4">
    <source>
    </source>
</evidence>
<evidence type="ECO:0000303" key="5">
    <source>
    </source>
</evidence>
<evidence type="ECO:0000303" key="6">
    <source ref="1"/>
</evidence>
<evidence type="ECO:0000303" key="7">
    <source ref="4"/>
</evidence>
<evidence type="ECO:0000305" key="8"/>
<evidence type="ECO:0000305" key="9">
    <source>
    </source>
</evidence>
<evidence type="ECO:0007744" key="10">
    <source>
    </source>
</evidence>
<feature type="chain" id="PRO_0000273246" description="Ethylmalonyl-CoA decarboxylase">
    <location>
        <begin position="1"/>
        <end position="307"/>
    </location>
</feature>
<feature type="modified residue" description="N6-acetyllysine; alternate" evidence="1">
    <location>
        <position position="217"/>
    </location>
</feature>
<feature type="modified residue" description="N6-succinyllysine; alternate" evidence="1">
    <location>
        <position position="217"/>
    </location>
</feature>
<feature type="modified residue" description="N6-succinyllysine" evidence="1">
    <location>
        <position position="301"/>
    </location>
</feature>
<feature type="splice variant" id="VSP_042581" description="In isoform 3 and isoform 4." evidence="3 6">
    <location>
        <begin position="1"/>
        <end position="81"/>
    </location>
</feature>
<feature type="splice variant" id="VSP_022498" description="In isoform 2, isoform 5 and isoform 6." evidence="4 5 7">
    <location>
        <begin position="1"/>
        <end position="6"/>
    </location>
</feature>
<feature type="splice variant" id="VSP_042582" description="In isoform 6." evidence="7">
    <original>TPEDGMAVCMFMQNTLTRFM</original>
    <variation>LQR</variation>
    <location>
        <begin position="125"/>
        <end position="144"/>
    </location>
</feature>
<feature type="splice variant" id="VSP_042583" description="In isoform 4 and isoform 5." evidence="6">
    <original>DGMAVCMFMQNTLTRFMRLPLISVALVQGWALGGGAEFTTACDFRLMTPESKIRFVHKEMGIIPSWGGTTRLVEIIGSRQALKVLSGALKLDSKNALNIGMVEEVLQSSDETKSLEEAQEWLKQFIQGPPEVIRALKKSVCSGRELYLEEALQNERDLLGTVWGGPANLEAIAKKGKFNK</original>
    <variation>TSFNKCCAGSRLGIGWRSRIYYSM</variation>
    <location>
        <begin position="128"/>
        <end position="307"/>
    </location>
</feature>
<feature type="sequence conflict" description="In Ref. 3; BAH14056." evidence="8" ref="3">
    <original>E</original>
    <variation>G</variation>
    <location>
        <position position="243"/>
    </location>
</feature>
<feature type="sequence conflict" description="In Ref. 3; BAH14056." evidence="8" ref="3">
    <original>L</original>
    <variation>M</variation>
    <location>
        <position position="263"/>
    </location>
</feature>
<feature type="initiator methionine" description="Removed" evidence="10">
    <location sequence="Q9NTX5-2">
        <position position="1"/>
    </location>
</feature>
<feature type="modified residue" description="N-acetylalanine" evidence="10">
    <location sequence="Q9NTX5-2">
        <position position="2"/>
    </location>
</feature>
<feature type="initiator methionine" description="Removed" evidence="10">
    <location sequence="Q9NTX5-5">
        <position position="1"/>
    </location>
</feature>
<feature type="modified residue" description="N-acetylalanine" evidence="10">
    <location sequence="Q9NTX5-5">
        <position position="2"/>
    </location>
</feature>
<feature type="initiator methionine" description="Removed" evidence="10">
    <location sequence="Q9NTX5-6">
        <position position="1"/>
    </location>
</feature>
<feature type="modified residue" description="N-acetylalanine" evidence="10">
    <location sequence="Q9NTX5-6">
        <position position="2"/>
    </location>
</feature>